<gene>
    <name type="primary">fusC</name>
</gene>
<accession>P24128</accession>
<feature type="chain" id="PRO_0000210088" description="Fusaric acid resistance protein FusC">
    <location>
        <begin position="1"/>
        <end position="346"/>
    </location>
</feature>
<feature type="transmembrane region" description="Helical" evidence="1">
    <location>
        <begin position="10"/>
        <end position="30"/>
    </location>
</feature>
<feature type="transmembrane region" description="Helical" evidence="1">
    <location>
        <begin position="248"/>
        <end position="268"/>
    </location>
</feature>
<feature type="transmembrane region" description="Helical" evidence="1">
    <location>
        <begin position="291"/>
        <end position="311"/>
    </location>
</feature>
<feature type="transmembrane region" description="Helical" evidence="1">
    <location>
        <begin position="315"/>
        <end position="335"/>
    </location>
</feature>
<keyword id="KW-1003">Cell membrane</keyword>
<keyword id="KW-0472">Membrane</keyword>
<keyword id="KW-0812">Transmembrane</keyword>
<keyword id="KW-1133">Transmembrane helix</keyword>
<keyword id="KW-0813">Transport</keyword>
<evidence type="ECO:0000255" key="1"/>
<evidence type="ECO:0000305" key="2"/>
<dbReference type="EMBL" id="S77489">
    <property type="protein sequence ID" value="AAC60390.1"/>
    <property type="molecule type" value="Genomic_DNA"/>
</dbReference>
<dbReference type="EMBL" id="D12503">
    <property type="protein sequence ID" value="BAA02066.1"/>
    <property type="molecule type" value="Genomic_DNA"/>
</dbReference>
<dbReference type="PIR" id="JS0511">
    <property type="entry name" value="JS0511"/>
</dbReference>
<dbReference type="STRING" id="292.WI67_07190"/>
<dbReference type="GO" id="GO:0005886">
    <property type="term" value="C:plasma membrane"/>
    <property type="evidence" value="ECO:0007669"/>
    <property type="project" value="UniProtKB-SubCell"/>
</dbReference>
<dbReference type="GO" id="GO:0022857">
    <property type="term" value="F:transmembrane transporter activity"/>
    <property type="evidence" value="ECO:0007669"/>
    <property type="project" value="InterPro"/>
</dbReference>
<dbReference type="InterPro" id="IPR006726">
    <property type="entry name" value="PHBA_efflux_AaeB/fusaric-R"/>
</dbReference>
<dbReference type="Pfam" id="PF04632">
    <property type="entry name" value="FUSC"/>
    <property type="match status" value="1"/>
</dbReference>
<organism>
    <name type="scientific">Burkholderia cepacia</name>
    <name type="common">Pseudomonas cepacia</name>
    <dbReference type="NCBI Taxonomy" id="292"/>
    <lineage>
        <taxon>Bacteria</taxon>
        <taxon>Pseudomonadati</taxon>
        <taxon>Pseudomonadota</taxon>
        <taxon>Betaproteobacteria</taxon>
        <taxon>Burkholderiales</taxon>
        <taxon>Burkholderiaceae</taxon>
        <taxon>Burkholderia</taxon>
        <taxon>Burkholderia cepacia complex</taxon>
    </lineage>
</organism>
<reference key="1">
    <citation type="journal article" date="1991" name="Agric. Biol. Chem.">
        <title>Molecular cloning and characterization of the fusaric acid-resistance gene from Pseudomonas cepacia.</title>
        <authorList>
            <person name="Utsumi R."/>
            <person name="Yagi T."/>
            <person name="Katayama S."/>
            <person name="Katsuragi K."/>
            <person name="Tachibana K."/>
            <person name="Toyoda H."/>
            <person name="Ouchi S."/>
            <person name="Obata K."/>
            <person name="Shibano Y."/>
            <person name="Noda M."/>
        </authorList>
    </citation>
    <scope>NUCLEOTIDE SEQUENCE [GENOMIC DNA]</scope>
    <source>
        <strain>UK1</strain>
    </source>
</reference>
<comment type="function">
    <text>Involved in the resistance (detoxification) of the fungal toxin fusaric acid.</text>
</comment>
<comment type="subcellular location">
    <subcellularLocation>
        <location evidence="2">Cell membrane</location>
        <topology evidence="2">Multi-pass membrane protein</topology>
    </subcellularLocation>
</comment>
<comment type="similarity">
    <text evidence="2">Belongs to the aromatic acid exporter ArAE (TC 2.A.85) family.</text>
</comment>
<sequence>MSAMTRVSEVIIGIVSAGVVSALVFPRYTGEQMRTTVRKRFGSFVDYVASALSGQLDRAHIETIHTRFAYVVGFEAARSMAVFEDPDTRMRSGRLARLNSEFMSASSRFHALHQLMNRLHAAGAQAAIDAIEPYFREIAPLLTRNGEPVRTSIDAAHSAEQLLAWRDALPRRIRATRAELETQPDFPLLDFDTAAELLYRFITDLQEYAATYASLATATHERERWIERYEPRTNKTAATIAGIRTATVILALGWFWIETAWPSGVMLVLNAAATCALASSAPRPTAMAAQMGMGTALAVCTGFLLTFGIYPRIDGFVLLCAALAPLLAIGIYMSLKPKLAGYGGAI</sequence>
<protein>
    <recommendedName>
        <fullName>Fusaric acid resistance protein FusC</fullName>
    </recommendedName>
</protein>
<proteinExistence type="inferred from homology"/>
<name>FUSC_BURCE</name>